<gene>
    <name evidence="1" type="primary">recF</name>
    <name type="ordered locus">YPTB3941</name>
</gene>
<reference key="1">
    <citation type="journal article" date="2004" name="Proc. Natl. Acad. Sci. U.S.A.">
        <title>Insights into the evolution of Yersinia pestis through whole-genome comparison with Yersinia pseudotuberculosis.</title>
        <authorList>
            <person name="Chain P.S.G."/>
            <person name="Carniel E."/>
            <person name="Larimer F.W."/>
            <person name="Lamerdin J."/>
            <person name="Stoutland P.O."/>
            <person name="Regala W.M."/>
            <person name="Georgescu A.M."/>
            <person name="Vergez L.M."/>
            <person name="Land M.L."/>
            <person name="Motin V.L."/>
            <person name="Brubaker R.R."/>
            <person name="Fowler J."/>
            <person name="Hinnebusch J."/>
            <person name="Marceau M."/>
            <person name="Medigue C."/>
            <person name="Simonet M."/>
            <person name="Chenal-Francisque V."/>
            <person name="Souza B."/>
            <person name="Dacheux D."/>
            <person name="Elliott J.M."/>
            <person name="Derbise A."/>
            <person name="Hauser L.J."/>
            <person name="Garcia E."/>
        </authorList>
    </citation>
    <scope>NUCLEOTIDE SEQUENCE [LARGE SCALE GENOMIC DNA]</scope>
    <source>
        <strain>IP32953</strain>
    </source>
</reference>
<dbReference type="EMBL" id="BX936398">
    <property type="protein sequence ID" value="CAH23179.1"/>
    <property type="status" value="ALT_INIT"/>
    <property type="molecule type" value="Genomic_DNA"/>
</dbReference>
<dbReference type="RefSeq" id="WP_002209643.1">
    <property type="nucleotide sequence ID" value="NZ_CP009712.1"/>
</dbReference>
<dbReference type="SMR" id="Q663T4"/>
<dbReference type="GeneID" id="57974627"/>
<dbReference type="KEGG" id="ypo:BZ17_2635"/>
<dbReference type="KEGG" id="yps:YPTB3941"/>
<dbReference type="PATRIC" id="fig|273123.14.peg.2763"/>
<dbReference type="Proteomes" id="UP000001011">
    <property type="component" value="Chromosome"/>
</dbReference>
<dbReference type="GO" id="GO:0005737">
    <property type="term" value="C:cytoplasm"/>
    <property type="evidence" value="ECO:0007669"/>
    <property type="project" value="UniProtKB-SubCell"/>
</dbReference>
<dbReference type="GO" id="GO:0005524">
    <property type="term" value="F:ATP binding"/>
    <property type="evidence" value="ECO:0007669"/>
    <property type="project" value="UniProtKB-UniRule"/>
</dbReference>
<dbReference type="GO" id="GO:0003697">
    <property type="term" value="F:single-stranded DNA binding"/>
    <property type="evidence" value="ECO:0007669"/>
    <property type="project" value="UniProtKB-UniRule"/>
</dbReference>
<dbReference type="GO" id="GO:0006260">
    <property type="term" value="P:DNA replication"/>
    <property type="evidence" value="ECO:0007669"/>
    <property type="project" value="UniProtKB-UniRule"/>
</dbReference>
<dbReference type="GO" id="GO:0000731">
    <property type="term" value="P:DNA synthesis involved in DNA repair"/>
    <property type="evidence" value="ECO:0007669"/>
    <property type="project" value="TreeGrafter"/>
</dbReference>
<dbReference type="GO" id="GO:0006302">
    <property type="term" value="P:double-strand break repair"/>
    <property type="evidence" value="ECO:0007669"/>
    <property type="project" value="TreeGrafter"/>
</dbReference>
<dbReference type="GO" id="GO:0009432">
    <property type="term" value="P:SOS response"/>
    <property type="evidence" value="ECO:0007669"/>
    <property type="project" value="UniProtKB-UniRule"/>
</dbReference>
<dbReference type="FunFam" id="1.20.1050.90:FF:000001">
    <property type="entry name" value="DNA replication and repair protein RecF"/>
    <property type="match status" value="1"/>
</dbReference>
<dbReference type="Gene3D" id="3.40.50.300">
    <property type="entry name" value="P-loop containing nucleotide triphosphate hydrolases"/>
    <property type="match status" value="1"/>
</dbReference>
<dbReference type="Gene3D" id="1.20.1050.90">
    <property type="entry name" value="RecF/RecN/SMC, N-terminal domain"/>
    <property type="match status" value="1"/>
</dbReference>
<dbReference type="HAMAP" id="MF_00365">
    <property type="entry name" value="RecF"/>
    <property type="match status" value="1"/>
</dbReference>
<dbReference type="InterPro" id="IPR001238">
    <property type="entry name" value="DNA-binding_RecF"/>
</dbReference>
<dbReference type="InterPro" id="IPR018078">
    <property type="entry name" value="DNA-binding_RecF_CS"/>
</dbReference>
<dbReference type="InterPro" id="IPR027417">
    <property type="entry name" value="P-loop_NTPase"/>
</dbReference>
<dbReference type="InterPro" id="IPR003395">
    <property type="entry name" value="RecF/RecN/SMC_N"/>
</dbReference>
<dbReference type="InterPro" id="IPR042174">
    <property type="entry name" value="RecF_2"/>
</dbReference>
<dbReference type="NCBIfam" id="TIGR00611">
    <property type="entry name" value="recf"/>
    <property type="match status" value="1"/>
</dbReference>
<dbReference type="PANTHER" id="PTHR32182">
    <property type="entry name" value="DNA REPLICATION AND REPAIR PROTEIN RECF"/>
    <property type="match status" value="1"/>
</dbReference>
<dbReference type="PANTHER" id="PTHR32182:SF0">
    <property type="entry name" value="DNA REPLICATION AND REPAIR PROTEIN RECF"/>
    <property type="match status" value="1"/>
</dbReference>
<dbReference type="Pfam" id="PF02463">
    <property type="entry name" value="SMC_N"/>
    <property type="match status" value="1"/>
</dbReference>
<dbReference type="SUPFAM" id="SSF52540">
    <property type="entry name" value="P-loop containing nucleoside triphosphate hydrolases"/>
    <property type="match status" value="1"/>
</dbReference>
<dbReference type="PROSITE" id="PS00617">
    <property type="entry name" value="RECF_1"/>
    <property type="match status" value="1"/>
</dbReference>
<dbReference type="PROSITE" id="PS00618">
    <property type="entry name" value="RECF_2"/>
    <property type="match status" value="1"/>
</dbReference>
<organism>
    <name type="scientific">Yersinia pseudotuberculosis serotype I (strain IP32953)</name>
    <dbReference type="NCBI Taxonomy" id="273123"/>
    <lineage>
        <taxon>Bacteria</taxon>
        <taxon>Pseudomonadati</taxon>
        <taxon>Pseudomonadota</taxon>
        <taxon>Gammaproteobacteria</taxon>
        <taxon>Enterobacterales</taxon>
        <taxon>Yersiniaceae</taxon>
        <taxon>Yersinia</taxon>
    </lineage>
</organism>
<evidence type="ECO:0000255" key="1">
    <source>
        <dbReference type="HAMAP-Rule" id="MF_00365"/>
    </source>
</evidence>
<evidence type="ECO:0000305" key="2"/>
<protein>
    <recommendedName>
        <fullName evidence="1">DNA replication and repair protein RecF</fullName>
    </recommendedName>
</protein>
<keyword id="KW-0067">ATP-binding</keyword>
<keyword id="KW-0963">Cytoplasm</keyword>
<keyword id="KW-0227">DNA damage</keyword>
<keyword id="KW-0234">DNA repair</keyword>
<keyword id="KW-0235">DNA replication</keyword>
<keyword id="KW-0238">DNA-binding</keyword>
<keyword id="KW-0547">Nucleotide-binding</keyword>
<keyword id="KW-0742">SOS response</keyword>
<comment type="function">
    <text evidence="1">The RecF protein is involved in DNA metabolism; it is required for DNA replication and normal SOS inducibility. RecF binds preferentially to single-stranded, linear DNA. It also seems to bind ATP.</text>
</comment>
<comment type="subcellular location">
    <subcellularLocation>
        <location evidence="1">Cytoplasm</location>
    </subcellularLocation>
</comment>
<comment type="similarity">
    <text evidence="1">Belongs to the RecF family.</text>
</comment>
<comment type="sequence caution" evidence="2">
    <conflict type="erroneous initiation">
        <sequence resource="EMBL-CDS" id="CAH23179"/>
    </conflict>
</comment>
<proteinExistence type="inferred from homology"/>
<sequence length="361" mass="40468">MALTRLLIKDFRNIESADLALAAGFNFLVGPNGSGKTSVLEAVYTLGHGRAFRSLQAGRVIRHECAEFVLHGRVDANEREASVGLSKSRQGDTKVRIDGTDGHKVAELAQMLPMQLITPEGFTLLNGGPKFRRAFLDWGCFHNEPGFFTAWSNLKRLLKQRNAALRQVSRYTQIRAWDQEIIPLAERISEWRAAYSDAIAADISATCALFLPEFALSFSFQRGWDKESDYGELLARQFERDRALTYTAVGPHKADFRIRADGTPVEDLLSRGQLKLLMCALRLAQGEFLTRQSGRRCLYLLDDFASELDTGRRRLLAERLKATQAQVFVSAVSAEQVADMVGEKGKMFRVEHGKIEVQPQD</sequence>
<accession>Q663T4</accession>
<feature type="chain" id="PRO_0000236164" description="DNA replication and repair protein RecF">
    <location>
        <begin position="1"/>
        <end position="361"/>
    </location>
</feature>
<feature type="binding site" evidence="1">
    <location>
        <begin position="30"/>
        <end position="37"/>
    </location>
    <ligand>
        <name>ATP</name>
        <dbReference type="ChEBI" id="CHEBI:30616"/>
    </ligand>
</feature>
<name>RECF_YERPS</name>